<accession>Q73ES6</accession>
<reference key="1">
    <citation type="journal article" date="2004" name="Nucleic Acids Res.">
        <title>The genome sequence of Bacillus cereus ATCC 10987 reveals metabolic adaptations and a large plasmid related to Bacillus anthracis pXO1.</title>
        <authorList>
            <person name="Rasko D.A."/>
            <person name="Ravel J."/>
            <person name="Oekstad O.A."/>
            <person name="Helgason E."/>
            <person name="Cer R.Z."/>
            <person name="Jiang L."/>
            <person name="Shores K.A."/>
            <person name="Fouts D.E."/>
            <person name="Tourasse N.J."/>
            <person name="Angiuoli S.V."/>
            <person name="Kolonay J.F."/>
            <person name="Nelson W.C."/>
            <person name="Kolstoe A.-B."/>
            <person name="Fraser C.M."/>
            <person name="Read T.D."/>
        </authorList>
    </citation>
    <scope>NUCLEOTIDE SEQUENCE [LARGE SCALE GENOMIC DNA]</scope>
    <source>
        <strain>ATCC 10987 / NRS 248</strain>
    </source>
</reference>
<name>TSAD_BACC1</name>
<proteinExistence type="inferred from homology"/>
<protein>
    <recommendedName>
        <fullName evidence="1">tRNA N6-adenosine threonylcarbamoyltransferase</fullName>
        <ecNumber evidence="1">2.3.1.234</ecNumber>
    </recommendedName>
    <alternativeName>
        <fullName evidence="1">N6-L-threonylcarbamoyladenine synthase</fullName>
        <shortName evidence="1">t(6)A synthase</shortName>
    </alternativeName>
    <alternativeName>
        <fullName evidence="1">t(6)A37 threonylcarbamoyladenosine biosynthesis protein TsaD</fullName>
    </alternativeName>
    <alternativeName>
        <fullName evidence="1">tRNA threonylcarbamoyladenosine biosynthesis protein TsaD</fullName>
    </alternativeName>
</protein>
<feature type="chain" id="PRO_0000303263" description="tRNA N6-adenosine threonylcarbamoyltransferase">
    <location>
        <begin position="1"/>
        <end position="343"/>
    </location>
</feature>
<feature type="binding site" evidence="1">
    <location>
        <position position="120"/>
    </location>
    <ligand>
        <name>Fe cation</name>
        <dbReference type="ChEBI" id="CHEBI:24875"/>
    </ligand>
</feature>
<feature type="binding site" evidence="1">
    <location>
        <position position="124"/>
    </location>
    <ligand>
        <name>Fe cation</name>
        <dbReference type="ChEBI" id="CHEBI:24875"/>
    </ligand>
</feature>
<feature type="binding site" evidence="1">
    <location>
        <begin position="142"/>
        <end position="146"/>
    </location>
    <ligand>
        <name>substrate</name>
    </ligand>
</feature>
<feature type="binding site" evidence="1">
    <location>
        <position position="175"/>
    </location>
    <ligand>
        <name>substrate</name>
    </ligand>
</feature>
<feature type="binding site" evidence="1">
    <location>
        <position position="188"/>
    </location>
    <ligand>
        <name>substrate</name>
    </ligand>
</feature>
<feature type="binding site" evidence="1">
    <location>
        <position position="192"/>
    </location>
    <ligand>
        <name>substrate</name>
    </ligand>
</feature>
<feature type="binding site" evidence="1">
    <location>
        <position position="281"/>
    </location>
    <ligand>
        <name>substrate</name>
    </ligand>
</feature>
<feature type="binding site" evidence="1">
    <location>
        <position position="310"/>
    </location>
    <ligand>
        <name>Fe cation</name>
        <dbReference type="ChEBI" id="CHEBI:24875"/>
    </ligand>
</feature>
<dbReference type="EC" id="2.3.1.234" evidence="1"/>
<dbReference type="EMBL" id="AE017194">
    <property type="protein sequence ID" value="AAS39218.1"/>
    <property type="status" value="ALT_INIT"/>
    <property type="molecule type" value="Genomic_DNA"/>
</dbReference>
<dbReference type="SMR" id="Q73ES6"/>
<dbReference type="KEGG" id="bca:BCE_0282"/>
<dbReference type="HOGENOM" id="CLU_023208_0_2_9"/>
<dbReference type="Proteomes" id="UP000002527">
    <property type="component" value="Chromosome"/>
</dbReference>
<dbReference type="GO" id="GO:0005737">
    <property type="term" value="C:cytoplasm"/>
    <property type="evidence" value="ECO:0007669"/>
    <property type="project" value="UniProtKB-SubCell"/>
</dbReference>
<dbReference type="GO" id="GO:0005506">
    <property type="term" value="F:iron ion binding"/>
    <property type="evidence" value="ECO:0007669"/>
    <property type="project" value="UniProtKB-UniRule"/>
</dbReference>
<dbReference type="GO" id="GO:0061711">
    <property type="term" value="F:N(6)-L-threonylcarbamoyladenine synthase activity"/>
    <property type="evidence" value="ECO:0007669"/>
    <property type="project" value="UniProtKB-EC"/>
</dbReference>
<dbReference type="GO" id="GO:0002949">
    <property type="term" value="P:tRNA threonylcarbamoyladenosine modification"/>
    <property type="evidence" value="ECO:0007669"/>
    <property type="project" value="UniProtKB-UniRule"/>
</dbReference>
<dbReference type="CDD" id="cd24133">
    <property type="entry name" value="ASKHA_NBD_TsaD_bac"/>
    <property type="match status" value="1"/>
</dbReference>
<dbReference type="FunFam" id="3.30.420.40:FF:000012">
    <property type="entry name" value="tRNA N6-adenosine threonylcarbamoyltransferase"/>
    <property type="match status" value="1"/>
</dbReference>
<dbReference type="FunFam" id="3.30.420.40:FF:000040">
    <property type="entry name" value="tRNA N6-adenosine threonylcarbamoyltransferase"/>
    <property type="match status" value="1"/>
</dbReference>
<dbReference type="Gene3D" id="3.30.420.40">
    <property type="match status" value="2"/>
</dbReference>
<dbReference type="HAMAP" id="MF_01445">
    <property type="entry name" value="TsaD"/>
    <property type="match status" value="1"/>
</dbReference>
<dbReference type="InterPro" id="IPR043129">
    <property type="entry name" value="ATPase_NBD"/>
</dbReference>
<dbReference type="InterPro" id="IPR000905">
    <property type="entry name" value="Gcp-like_dom"/>
</dbReference>
<dbReference type="InterPro" id="IPR017861">
    <property type="entry name" value="KAE1/TsaD"/>
</dbReference>
<dbReference type="InterPro" id="IPR017860">
    <property type="entry name" value="Peptidase_M22_CS"/>
</dbReference>
<dbReference type="InterPro" id="IPR022450">
    <property type="entry name" value="TsaD"/>
</dbReference>
<dbReference type="NCBIfam" id="TIGR00329">
    <property type="entry name" value="gcp_kae1"/>
    <property type="match status" value="1"/>
</dbReference>
<dbReference type="NCBIfam" id="TIGR03723">
    <property type="entry name" value="T6A_TsaD_YgjD"/>
    <property type="match status" value="1"/>
</dbReference>
<dbReference type="PANTHER" id="PTHR11735">
    <property type="entry name" value="TRNA N6-ADENOSINE THREONYLCARBAMOYLTRANSFERASE"/>
    <property type="match status" value="1"/>
</dbReference>
<dbReference type="PANTHER" id="PTHR11735:SF6">
    <property type="entry name" value="TRNA N6-ADENOSINE THREONYLCARBAMOYLTRANSFERASE, MITOCHONDRIAL"/>
    <property type="match status" value="1"/>
</dbReference>
<dbReference type="Pfam" id="PF00814">
    <property type="entry name" value="TsaD"/>
    <property type="match status" value="1"/>
</dbReference>
<dbReference type="PRINTS" id="PR00789">
    <property type="entry name" value="OSIALOPTASE"/>
</dbReference>
<dbReference type="SUPFAM" id="SSF53067">
    <property type="entry name" value="Actin-like ATPase domain"/>
    <property type="match status" value="2"/>
</dbReference>
<dbReference type="PROSITE" id="PS01016">
    <property type="entry name" value="GLYCOPROTEASE"/>
    <property type="match status" value="1"/>
</dbReference>
<keyword id="KW-0012">Acyltransferase</keyword>
<keyword id="KW-0963">Cytoplasm</keyword>
<keyword id="KW-0408">Iron</keyword>
<keyword id="KW-0479">Metal-binding</keyword>
<keyword id="KW-0808">Transferase</keyword>
<keyword id="KW-0819">tRNA processing</keyword>
<evidence type="ECO:0000255" key="1">
    <source>
        <dbReference type="HAMAP-Rule" id="MF_01445"/>
    </source>
</evidence>
<evidence type="ECO:0000305" key="2"/>
<comment type="function">
    <text evidence="1">Required for the formation of a threonylcarbamoyl group on adenosine at position 37 (t(6)A37) in tRNAs that read codons beginning with adenine. Is involved in the transfer of the threonylcarbamoyl moiety of threonylcarbamoyl-AMP (TC-AMP) to the N6 group of A37, together with TsaE and TsaB. TsaD likely plays a direct catalytic role in this reaction.</text>
</comment>
<comment type="catalytic activity">
    <reaction evidence="1">
        <text>L-threonylcarbamoyladenylate + adenosine(37) in tRNA = N(6)-L-threonylcarbamoyladenosine(37) in tRNA + AMP + H(+)</text>
        <dbReference type="Rhea" id="RHEA:37059"/>
        <dbReference type="Rhea" id="RHEA-COMP:10162"/>
        <dbReference type="Rhea" id="RHEA-COMP:10163"/>
        <dbReference type="ChEBI" id="CHEBI:15378"/>
        <dbReference type="ChEBI" id="CHEBI:73682"/>
        <dbReference type="ChEBI" id="CHEBI:74411"/>
        <dbReference type="ChEBI" id="CHEBI:74418"/>
        <dbReference type="ChEBI" id="CHEBI:456215"/>
        <dbReference type="EC" id="2.3.1.234"/>
    </reaction>
</comment>
<comment type="cofactor">
    <cofactor evidence="1">
        <name>Fe(2+)</name>
        <dbReference type="ChEBI" id="CHEBI:29033"/>
    </cofactor>
    <text evidence="1">Binds 1 Fe(2+) ion per subunit.</text>
</comment>
<comment type="subcellular location">
    <subcellularLocation>
        <location evidence="1">Cytoplasm</location>
    </subcellularLocation>
</comment>
<comment type="similarity">
    <text evidence="1">Belongs to the KAE1 / TsaD family.</text>
</comment>
<comment type="sequence caution" evidence="2">
    <conflict type="erroneous initiation">
        <sequence resource="EMBL-CDS" id="AAS39218"/>
    </conflict>
</comment>
<sequence length="343" mass="36538">MGEYIMEKNTIILGIETSCDETAVAVVKNGTEIIANVVASQIESHKRFGGVVPEIASRHHVEEITVVLEEALKEANITFDDIDAIAVTEGPGLVGALLIGVNAAKAVAFAHDIPLVGVHHIAGHIYANRLVKEVQFPLLSLVVSGGHTELVYMKEHGSFEVIGETRDDAAGEAYDKVARTLSMPYPGGPHIDRLAHEGEPTIDLPRAWLEPDSYDFSFSGLKSAVINTVHNAKQRGIEIAPEDLAASFQESVIDVLVTKASRAADAYNVKQVLLAGGVAANKGLRARLEAEFAQKENVELIIPPLSLCTDNAAMIAAAGTIAYEQGKRATLALNANPGLDIEA</sequence>
<gene>
    <name evidence="1" type="primary">tsaD</name>
    <name type="synonym">gcp</name>
    <name type="ordered locus">BCE_0282</name>
</gene>
<organism>
    <name type="scientific">Bacillus cereus (strain ATCC 10987 / NRS 248)</name>
    <dbReference type="NCBI Taxonomy" id="222523"/>
    <lineage>
        <taxon>Bacteria</taxon>
        <taxon>Bacillati</taxon>
        <taxon>Bacillota</taxon>
        <taxon>Bacilli</taxon>
        <taxon>Bacillales</taxon>
        <taxon>Bacillaceae</taxon>
        <taxon>Bacillus</taxon>
        <taxon>Bacillus cereus group</taxon>
    </lineage>
</organism>